<protein>
    <recommendedName>
        <fullName evidence="7">Probable palmitoyltransferase ZDHHC11B</fullName>
        <ecNumber evidence="2">2.3.1.225</ecNumber>
    </recommendedName>
    <alternativeName>
        <fullName evidence="8">Zinc finger DHHC domain-containing protein 11B</fullName>
        <shortName>DHHC-11B</shortName>
    </alternativeName>
</protein>
<name>ZH11B_HUMAN</name>
<comment type="function">
    <text evidence="2 6">Probable palmitoyltransferase that could catalyze the addition of palmitate onto various protein substrates and be involved in a variety of cellular processes (By similarity). May play a role in cell proliferation (PubMed:28331227).</text>
</comment>
<comment type="catalytic activity">
    <reaction evidence="2">
        <text>L-cysteinyl-[protein] + hexadecanoyl-CoA = S-hexadecanoyl-L-cysteinyl-[protein] + CoA</text>
        <dbReference type="Rhea" id="RHEA:36683"/>
        <dbReference type="Rhea" id="RHEA-COMP:10131"/>
        <dbReference type="Rhea" id="RHEA-COMP:11032"/>
        <dbReference type="ChEBI" id="CHEBI:29950"/>
        <dbReference type="ChEBI" id="CHEBI:57287"/>
        <dbReference type="ChEBI" id="CHEBI:57379"/>
        <dbReference type="ChEBI" id="CHEBI:74151"/>
        <dbReference type="EC" id="2.3.1.225"/>
    </reaction>
    <physiologicalReaction direction="left-to-right" evidence="2">
        <dbReference type="Rhea" id="RHEA:36684"/>
    </physiologicalReaction>
</comment>
<comment type="subcellular location">
    <subcellularLocation>
        <location evidence="3">Membrane</location>
        <topology evidence="3">Multi-pass membrane protein</topology>
    </subcellularLocation>
</comment>
<comment type="domain">
    <text evidence="1">The DHHC domain is required for palmitoyltransferase activity.</text>
</comment>
<comment type="similarity">
    <text evidence="7">Belongs to the DHHC palmitoyltransferase family.</text>
</comment>
<gene>
    <name evidence="8" type="primary">ZDHHC11B</name>
</gene>
<dbReference type="EC" id="2.3.1.225" evidence="2"/>
<dbReference type="EMBL" id="AC026740">
    <property type="status" value="NOT_ANNOTATED_CDS"/>
    <property type="molecule type" value="Genomic_DNA"/>
</dbReference>
<dbReference type="CCDS" id="CCDS87287.1"/>
<dbReference type="RefSeq" id="NP_001338232.1">
    <property type="nucleotide sequence ID" value="NM_001351303.2"/>
</dbReference>
<dbReference type="BioGRID" id="575511">
    <property type="interactions" value="1"/>
</dbReference>
<dbReference type="FunCoup" id="P0C7U3">
    <property type="interactions" value="44"/>
</dbReference>
<dbReference type="STRING" id="9606.ENSP00000442373"/>
<dbReference type="iPTMnet" id="P0C7U3"/>
<dbReference type="PhosphoSitePlus" id="P0C7U3"/>
<dbReference type="BioMuta" id="ZDHHC11B"/>
<dbReference type="DMDM" id="206557841"/>
<dbReference type="jPOST" id="P0C7U3"/>
<dbReference type="MassIVE" id="P0C7U3"/>
<dbReference type="PaxDb" id="9606-ENSP00000442373"/>
<dbReference type="PeptideAtlas" id="P0C7U3"/>
<dbReference type="Antibodypedia" id="64923">
    <property type="antibodies" value="14 antibodies from 5 providers"/>
</dbReference>
<dbReference type="Ensembl" id="ENST00000508859.8">
    <property type="protein sequence ID" value="ENSP00000442373.2"/>
    <property type="gene ID" value="ENSG00000206077.14"/>
</dbReference>
<dbReference type="GeneID" id="653082"/>
<dbReference type="MANE-Select" id="ENST00000508859.8">
    <property type="protein sequence ID" value="ENSP00000442373.2"/>
    <property type="RefSeq nucleotide sequence ID" value="NM_001351303.2"/>
    <property type="RefSeq protein sequence ID" value="NP_001338232.1"/>
</dbReference>
<dbReference type="UCSC" id="uc063bxc.1">
    <property type="organism name" value="human"/>
</dbReference>
<dbReference type="AGR" id="HGNC:32962"/>
<dbReference type="GeneCards" id="ZDHHC11B"/>
<dbReference type="HGNC" id="HGNC:32962">
    <property type="gene designation" value="ZDHHC11B"/>
</dbReference>
<dbReference type="HPA" id="ENSG00000206077">
    <property type="expression patterns" value="Tissue enhanced (brain)"/>
</dbReference>
<dbReference type="neXtProt" id="NX_P0C7U3"/>
<dbReference type="OpenTargets" id="ENSG00000206077"/>
<dbReference type="VEuPathDB" id="HostDB:ENSG00000206077"/>
<dbReference type="eggNOG" id="KOG1311">
    <property type="taxonomic scope" value="Eukaryota"/>
</dbReference>
<dbReference type="GeneTree" id="ENSGT00940000161608"/>
<dbReference type="HOGENOM" id="CLU_020283_1_1_1"/>
<dbReference type="InParanoid" id="P0C7U3"/>
<dbReference type="OMA" id="RTKQPHV"/>
<dbReference type="PAN-GO" id="P0C7U3">
    <property type="GO annotations" value="5 GO annotations based on evolutionary models"/>
</dbReference>
<dbReference type="PhylomeDB" id="P0C7U3"/>
<dbReference type="Pharos" id="P0C7U3">
    <property type="development level" value="Tdark"/>
</dbReference>
<dbReference type="PRO" id="PR:P0C7U3"/>
<dbReference type="Proteomes" id="UP000005640">
    <property type="component" value="Chromosome 5"/>
</dbReference>
<dbReference type="RNAct" id="P0C7U3">
    <property type="molecule type" value="protein"/>
</dbReference>
<dbReference type="Bgee" id="ENSG00000206077">
    <property type="expression patterns" value="Expressed in cerebellar vermis and 95 other cell types or tissues"/>
</dbReference>
<dbReference type="ExpressionAtlas" id="P0C7U3">
    <property type="expression patterns" value="baseline and differential"/>
</dbReference>
<dbReference type="GO" id="GO:0005783">
    <property type="term" value="C:endoplasmic reticulum"/>
    <property type="evidence" value="ECO:0000318"/>
    <property type="project" value="GO_Central"/>
</dbReference>
<dbReference type="GO" id="GO:0005794">
    <property type="term" value="C:Golgi apparatus"/>
    <property type="evidence" value="ECO:0000318"/>
    <property type="project" value="GO_Central"/>
</dbReference>
<dbReference type="GO" id="GO:0016020">
    <property type="term" value="C:membrane"/>
    <property type="evidence" value="ECO:0007669"/>
    <property type="project" value="UniProtKB-SubCell"/>
</dbReference>
<dbReference type="GO" id="GO:0019706">
    <property type="term" value="F:protein-cysteine S-palmitoyltransferase activity"/>
    <property type="evidence" value="ECO:0000318"/>
    <property type="project" value="GO_Central"/>
</dbReference>
<dbReference type="GO" id="GO:0140374">
    <property type="term" value="P:antiviral innate immune response"/>
    <property type="evidence" value="ECO:0000318"/>
    <property type="project" value="GO_Central"/>
</dbReference>
<dbReference type="GO" id="GO:0006612">
    <property type="term" value="P:protein targeting to membrane"/>
    <property type="evidence" value="ECO:0000318"/>
    <property type="project" value="GO_Central"/>
</dbReference>
<dbReference type="InterPro" id="IPR001594">
    <property type="entry name" value="Palmitoyltrfase_DHHC"/>
</dbReference>
<dbReference type="InterPro" id="IPR039859">
    <property type="entry name" value="PFA4/ZDH16/20/ERF2-like"/>
</dbReference>
<dbReference type="PANTHER" id="PTHR22883:SF22">
    <property type="entry name" value="PALMITOYLTRANSFERASE ZDHHC11-RELATED"/>
    <property type="match status" value="1"/>
</dbReference>
<dbReference type="PANTHER" id="PTHR22883">
    <property type="entry name" value="ZINC FINGER DHHC DOMAIN CONTAINING PROTEIN"/>
    <property type="match status" value="1"/>
</dbReference>
<dbReference type="Pfam" id="PF01529">
    <property type="entry name" value="DHHC"/>
    <property type="match status" value="1"/>
</dbReference>
<dbReference type="PROSITE" id="PS50216">
    <property type="entry name" value="DHHC"/>
    <property type="match status" value="1"/>
</dbReference>
<keyword id="KW-0012">Acyltransferase</keyword>
<keyword id="KW-0449">Lipoprotein</keyword>
<keyword id="KW-0472">Membrane</keyword>
<keyword id="KW-0564">Palmitate</keyword>
<keyword id="KW-1185">Reference proteome</keyword>
<keyword id="KW-0808">Transferase</keyword>
<keyword id="KW-0812">Transmembrane</keyword>
<keyword id="KW-1133">Transmembrane helix</keyword>
<sequence>MDTRSGSQCSVTPEAIRNNEELVLPPRISRVNGWSLPLHYFRVVTWAVFVGLSLATFRIFIPLLPHSWKYIAYVVTGGIFSFHLVVHLIASCIDPADSNVRLMKNYSQPMPLFDRSKHAHVIQNQFCHLCKVTVNKKTKHCISCNKCVSGFDHHCKWINNCVGSRNYWFFFSTVASATAGMLCLIAILLYVLVQYLVNPRVLRTDPRYEDVKNMNTWLLFLPLFPVQVQTLIVVIIRMLVLLLDLLGLVQLGQLLIFHIYLKAKKMTTFEYLINTRKEESSKHQAVRKDPYVQMDKGFLQQGAGALGSSAQGVKAKSSLLIYKCPCHFCTSVNQDGDSKAQEADDAPSTSTLGLQQETTEPMKTDSAESED</sequence>
<proteinExistence type="inferred from homology"/>
<organism>
    <name type="scientific">Homo sapiens</name>
    <name type="common">Human</name>
    <dbReference type="NCBI Taxonomy" id="9606"/>
    <lineage>
        <taxon>Eukaryota</taxon>
        <taxon>Metazoa</taxon>
        <taxon>Chordata</taxon>
        <taxon>Craniata</taxon>
        <taxon>Vertebrata</taxon>
        <taxon>Euteleostomi</taxon>
        <taxon>Mammalia</taxon>
        <taxon>Eutheria</taxon>
        <taxon>Euarchontoglires</taxon>
        <taxon>Primates</taxon>
        <taxon>Haplorrhini</taxon>
        <taxon>Catarrhini</taxon>
        <taxon>Hominidae</taxon>
        <taxon>Homo</taxon>
    </lineage>
</organism>
<accession>P0C7U3</accession>
<accession>A6NHR3</accession>
<reference key="1">
    <citation type="journal article" date="2004" name="Nature">
        <title>The DNA sequence and comparative analysis of human chromosome 5.</title>
        <authorList>
            <person name="Schmutz J."/>
            <person name="Martin J."/>
            <person name="Terry A."/>
            <person name="Couronne O."/>
            <person name="Grimwood J."/>
            <person name="Lowry S."/>
            <person name="Gordon L.A."/>
            <person name="Scott D."/>
            <person name="Xie G."/>
            <person name="Huang W."/>
            <person name="Hellsten U."/>
            <person name="Tran-Gyamfi M."/>
            <person name="She X."/>
            <person name="Prabhakar S."/>
            <person name="Aerts A."/>
            <person name="Altherr M."/>
            <person name="Bajorek E."/>
            <person name="Black S."/>
            <person name="Branscomb E."/>
            <person name="Caoile C."/>
            <person name="Challacombe J.F."/>
            <person name="Chan Y.M."/>
            <person name="Denys M."/>
            <person name="Detter J.C."/>
            <person name="Escobar J."/>
            <person name="Flowers D."/>
            <person name="Fotopulos D."/>
            <person name="Glavina T."/>
            <person name="Gomez M."/>
            <person name="Gonzales E."/>
            <person name="Goodstein D."/>
            <person name="Grigoriev I."/>
            <person name="Groza M."/>
            <person name="Hammon N."/>
            <person name="Hawkins T."/>
            <person name="Haydu L."/>
            <person name="Israni S."/>
            <person name="Jett J."/>
            <person name="Kadner K."/>
            <person name="Kimball H."/>
            <person name="Kobayashi A."/>
            <person name="Lopez F."/>
            <person name="Lou Y."/>
            <person name="Martinez D."/>
            <person name="Medina C."/>
            <person name="Morgan J."/>
            <person name="Nandkeshwar R."/>
            <person name="Noonan J.P."/>
            <person name="Pitluck S."/>
            <person name="Pollard M."/>
            <person name="Predki P."/>
            <person name="Priest J."/>
            <person name="Ramirez L."/>
            <person name="Retterer J."/>
            <person name="Rodriguez A."/>
            <person name="Rogers S."/>
            <person name="Salamov A."/>
            <person name="Salazar A."/>
            <person name="Thayer N."/>
            <person name="Tice H."/>
            <person name="Tsai M."/>
            <person name="Ustaszewska A."/>
            <person name="Vo N."/>
            <person name="Wheeler J."/>
            <person name="Wu K."/>
            <person name="Yang J."/>
            <person name="Dickson M."/>
            <person name="Cheng J.-F."/>
            <person name="Eichler E.E."/>
            <person name="Olsen A."/>
            <person name="Pennacchio L.A."/>
            <person name="Rokhsar D.S."/>
            <person name="Richardson P."/>
            <person name="Lucas S.M."/>
            <person name="Myers R.M."/>
            <person name="Rubin E.M."/>
        </authorList>
    </citation>
    <scope>NUCLEOTIDE SEQUENCE [LARGE SCALE GENOMIC DNA]</scope>
</reference>
<reference key="2">
    <citation type="journal article" date="2017" name="Leukemia">
        <title>ZDHHC11 and ZDHHC11B are critical novel components of the oncogenic MYC-miR-150-MYB network in Burkitt lymphoma.</title>
        <authorList>
            <person name="Dzikiewicz-Krawczyk A."/>
            <person name="Kok K."/>
            <person name="Slezak-Prochazka I."/>
            <person name="Robertus J.L."/>
            <person name="Bruining J."/>
            <person name="Tayari M.M."/>
            <person name="Rutgers B."/>
            <person name="de Jong D."/>
            <person name="Koerts J."/>
            <person name="Seitz A."/>
            <person name="Li J."/>
            <person name="Tillema B."/>
            <person name="Guikema J.E."/>
            <person name="Nolte I.M."/>
            <person name="Diepstra A."/>
            <person name="Visser L."/>
            <person name="Kluiver J."/>
            <person name="van den Berg A."/>
        </authorList>
    </citation>
    <scope>FUNCTION</scope>
</reference>
<evidence type="ECO:0000250" key="1">
    <source>
        <dbReference type="UniProtKB" id="Q8IUH5"/>
    </source>
</evidence>
<evidence type="ECO:0000250" key="2">
    <source>
        <dbReference type="UniProtKB" id="Q9H8X9"/>
    </source>
</evidence>
<evidence type="ECO:0000255" key="3"/>
<evidence type="ECO:0000255" key="4">
    <source>
        <dbReference type="PROSITE-ProRule" id="PRU00067"/>
    </source>
</evidence>
<evidence type="ECO:0000256" key="5">
    <source>
        <dbReference type="SAM" id="MobiDB-lite"/>
    </source>
</evidence>
<evidence type="ECO:0000269" key="6">
    <source>
    </source>
</evidence>
<evidence type="ECO:0000305" key="7"/>
<evidence type="ECO:0000312" key="8">
    <source>
        <dbReference type="HGNC" id="HGNC:32962"/>
    </source>
</evidence>
<feature type="chain" id="PRO_0000343747" description="Probable palmitoyltransferase ZDHHC11B">
    <location>
        <begin position="1"/>
        <end position="371"/>
    </location>
</feature>
<feature type="transmembrane region" description="Helical" evidence="3">
    <location>
        <begin position="43"/>
        <end position="63"/>
    </location>
</feature>
<feature type="transmembrane region" description="Helical" evidence="3">
    <location>
        <begin position="70"/>
        <end position="90"/>
    </location>
</feature>
<feature type="transmembrane region" description="Helical" evidence="3">
    <location>
        <begin position="177"/>
        <end position="197"/>
    </location>
</feature>
<feature type="transmembrane region" description="Helical" evidence="3">
    <location>
        <begin position="216"/>
        <end position="236"/>
    </location>
</feature>
<feature type="transmembrane region" description="Helical" evidence="3">
    <location>
        <begin position="239"/>
        <end position="259"/>
    </location>
</feature>
<feature type="domain" description="DHHC" evidence="4">
    <location>
        <begin position="125"/>
        <end position="175"/>
    </location>
</feature>
<feature type="region of interest" description="Disordered" evidence="5">
    <location>
        <begin position="335"/>
        <end position="371"/>
    </location>
</feature>
<feature type="compositionally biased region" description="Polar residues" evidence="5">
    <location>
        <begin position="347"/>
        <end position="359"/>
    </location>
</feature>
<feature type="compositionally biased region" description="Basic and acidic residues" evidence="5">
    <location>
        <begin position="360"/>
        <end position="371"/>
    </location>
</feature>
<feature type="active site" description="S-palmitoyl cysteine intermediate" evidence="4">
    <location>
        <position position="155"/>
    </location>
</feature>
<feature type="sequence variant" id="VAR_052976" description="In dbSNP:rs1809933.">
    <original>R</original>
    <variation>Q</variation>
    <location>
        <position position="42"/>
    </location>
</feature>
<feature type="sequence variant" id="VAR_052977" description="In dbSNP:rs634901.">
    <original>R</original>
    <variation>G</variation>
    <location>
        <position position="200"/>
    </location>
</feature>
<feature type="sequence variant" id="VAR_061990" description="In dbSNP:rs3817063.">
    <original>V</original>
    <variation>L</variation>
    <location>
        <position position="228"/>
    </location>
</feature>